<sequence>MAGTIEVLVPGGKANPGPPLGPELGPTPVDVQDVVNDINDQTAAFDGMEVPVTVEYDDDGSFSIEVGVPPTAALIKDEVGFDTGSGEPQENFVADMSIEQLKKVAEQKSSDLLSYDLKNASKEVAGTCASLGVTIEGEDARTFKQRIDGGDFDDYFDDE</sequence>
<name>RL11_HALVD</name>
<dbReference type="EMBL" id="X58924">
    <property type="protein sequence ID" value="CAA41722.1"/>
    <property type="molecule type" value="Genomic_DNA"/>
</dbReference>
<dbReference type="EMBL" id="CP001956">
    <property type="protein sequence ID" value="ADE04471.1"/>
    <property type="molecule type" value="Genomic_DNA"/>
</dbReference>
<dbReference type="PIR" id="S34134">
    <property type="entry name" value="S34134"/>
</dbReference>
<dbReference type="RefSeq" id="WP_004043005.1">
    <property type="nucleotide sequence ID" value="NZ_AOHU01000047.1"/>
</dbReference>
<dbReference type="SMR" id="P41200"/>
<dbReference type="IntAct" id="P41200">
    <property type="interactions" value="5"/>
</dbReference>
<dbReference type="STRING" id="309800.HVO_2758"/>
<dbReference type="PaxDb" id="309800-C498_09079"/>
<dbReference type="EnsemblBacteria" id="ADE04471">
    <property type="protein sequence ID" value="ADE04471"/>
    <property type="gene ID" value="HVO_2758"/>
</dbReference>
<dbReference type="GeneID" id="8925070"/>
<dbReference type="KEGG" id="hvo:HVO_2758"/>
<dbReference type="eggNOG" id="arCOG04372">
    <property type="taxonomic scope" value="Archaea"/>
</dbReference>
<dbReference type="HOGENOM" id="CLU_074237_4_0_2"/>
<dbReference type="OrthoDB" id="8842at2157"/>
<dbReference type="Proteomes" id="UP000008243">
    <property type="component" value="Chromosome"/>
</dbReference>
<dbReference type="GO" id="GO:0015934">
    <property type="term" value="C:large ribosomal subunit"/>
    <property type="evidence" value="ECO:0007669"/>
    <property type="project" value="TreeGrafter"/>
</dbReference>
<dbReference type="GO" id="GO:0070180">
    <property type="term" value="F:large ribosomal subunit rRNA binding"/>
    <property type="evidence" value="ECO:0007669"/>
    <property type="project" value="UniProtKB-UniRule"/>
</dbReference>
<dbReference type="GO" id="GO:0003735">
    <property type="term" value="F:structural constituent of ribosome"/>
    <property type="evidence" value="ECO:0007669"/>
    <property type="project" value="InterPro"/>
</dbReference>
<dbReference type="GO" id="GO:0006412">
    <property type="term" value="P:translation"/>
    <property type="evidence" value="ECO:0007669"/>
    <property type="project" value="UniProtKB-UniRule"/>
</dbReference>
<dbReference type="CDD" id="cd00349">
    <property type="entry name" value="Ribosomal_L11"/>
    <property type="match status" value="1"/>
</dbReference>
<dbReference type="FunFam" id="1.10.10.250:FF:000006">
    <property type="entry name" value="50S ribosomal protein L11"/>
    <property type="match status" value="1"/>
</dbReference>
<dbReference type="FunFam" id="3.30.1550.10:FF:000007">
    <property type="entry name" value="50S ribosomal protein L11"/>
    <property type="match status" value="1"/>
</dbReference>
<dbReference type="Gene3D" id="1.10.10.250">
    <property type="entry name" value="Ribosomal protein L11, C-terminal domain"/>
    <property type="match status" value="1"/>
</dbReference>
<dbReference type="Gene3D" id="3.30.1550.10">
    <property type="entry name" value="Ribosomal protein L11/L12, N-terminal domain"/>
    <property type="match status" value="1"/>
</dbReference>
<dbReference type="HAMAP" id="MF_00736">
    <property type="entry name" value="Ribosomal_uL11"/>
    <property type="match status" value="1"/>
</dbReference>
<dbReference type="InterPro" id="IPR000911">
    <property type="entry name" value="Ribosomal_uL11"/>
</dbReference>
<dbReference type="InterPro" id="IPR020783">
    <property type="entry name" value="Ribosomal_uL11_C"/>
</dbReference>
<dbReference type="InterPro" id="IPR036769">
    <property type="entry name" value="Ribosomal_uL11_C_sf"/>
</dbReference>
<dbReference type="InterPro" id="IPR020785">
    <property type="entry name" value="Ribosomal_uL11_CS"/>
</dbReference>
<dbReference type="InterPro" id="IPR020784">
    <property type="entry name" value="Ribosomal_uL11_N"/>
</dbReference>
<dbReference type="InterPro" id="IPR036796">
    <property type="entry name" value="Ribosomal_uL11_N_sf"/>
</dbReference>
<dbReference type="NCBIfam" id="NF002232">
    <property type="entry name" value="PRK01143.1"/>
    <property type="match status" value="1"/>
</dbReference>
<dbReference type="PANTHER" id="PTHR11661">
    <property type="entry name" value="60S RIBOSOMAL PROTEIN L12"/>
    <property type="match status" value="1"/>
</dbReference>
<dbReference type="PANTHER" id="PTHR11661:SF1">
    <property type="entry name" value="LARGE RIBOSOMAL SUBUNIT PROTEIN UL11M"/>
    <property type="match status" value="1"/>
</dbReference>
<dbReference type="Pfam" id="PF00298">
    <property type="entry name" value="Ribosomal_L11"/>
    <property type="match status" value="1"/>
</dbReference>
<dbReference type="Pfam" id="PF03946">
    <property type="entry name" value="Ribosomal_L11_N"/>
    <property type="match status" value="1"/>
</dbReference>
<dbReference type="SMART" id="SM00649">
    <property type="entry name" value="RL11"/>
    <property type="match status" value="1"/>
</dbReference>
<dbReference type="SUPFAM" id="SSF54747">
    <property type="entry name" value="Ribosomal L11/L12e N-terminal domain"/>
    <property type="match status" value="1"/>
</dbReference>
<dbReference type="SUPFAM" id="SSF46906">
    <property type="entry name" value="Ribosomal protein L11, C-terminal domain"/>
    <property type="match status" value="1"/>
</dbReference>
<dbReference type="PROSITE" id="PS00359">
    <property type="entry name" value="RIBOSOMAL_L11"/>
    <property type="match status" value="1"/>
</dbReference>
<gene>
    <name evidence="2" type="primary">rpl11</name>
    <name type="ordered locus">HVO_2758</name>
</gene>
<feature type="initiator methionine" description="Removed" evidence="1">
    <location>
        <position position="1"/>
    </location>
</feature>
<feature type="chain" id="PRO_0000104433" description="Large ribosomal subunit protein uL11">
    <location>
        <begin position="2"/>
        <end position="159"/>
    </location>
</feature>
<feature type="region of interest" description="Disordered" evidence="3">
    <location>
        <begin position="1"/>
        <end position="26"/>
    </location>
</feature>
<organism>
    <name type="scientific">Haloferax volcanii (strain ATCC 29605 / DSM 3757 / JCM 8879 / NBRC 14742 / NCIMB 2012 / VKM B-1768 / DS2)</name>
    <name type="common">Halobacterium volcanii</name>
    <dbReference type="NCBI Taxonomy" id="309800"/>
    <lineage>
        <taxon>Archaea</taxon>
        <taxon>Methanobacteriati</taxon>
        <taxon>Methanobacteriota</taxon>
        <taxon>Stenosarchaea group</taxon>
        <taxon>Halobacteria</taxon>
        <taxon>Halobacteriales</taxon>
        <taxon>Haloferacaceae</taxon>
        <taxon>Haloferax</taxon>
    </lineage>
</organism>
<comment type="function">
    <text evidence="2">Forms part of the ribosomal stalk which helps the ribosome interact with GTP-bound translation factors.</text>
</comment>
<comment type="subunit">
    <text evidence="2">Part of the ribosomal stalk of the 50S ribosomal subunit. Interacts with L10 and the large rRNA to form the base of the stalk. L10 forms an elongated spine to which L12 dimers bind in a sequential fashion forming a multimeric L10(L12)X complex.</text>
</comment>
<comment type="similarity">
    <text evidence="2">Belongs to the universal ribosomal protein uL11 family.</text>
</comment>
<proteinExistence type="inferred from homology"/>
<reference key="1">
    <citation type="journal article" date="1996" name="J. Bacteriol.">
        <title>Conserved sequence elements involved in regulation of ribosomal protein gene expression in halophilic archaea.</title>
        <authorList>
            <person name="Shimmin L.C."/>
            <person name="Dennis P.P."/>
        </authorList>
    </citation>
    <scope>NUCLEOTIDE SEQUENCE [GENOMIC DNA]</scope>
    <source>
        <strain>ATCC 29605 / DSM 3757 / JCM 8879 / NBRC 14742 / NCIMB 2012 / VKM B-1768 / DS2</strain>
    </source>
</reference>
<reference key="2">
    <citation type="journal article" date="2010" name="PLoS ONE">
        <title>The complete genome sequence of Haloferax volcanii DS2, a model archaeon.</title>
        <authorList>
            <person name="Hartman A.L."/>
            <person name="Norais C."/>
            <person name="Badger J.H."/>
            <person name="Delmas S."/>
            <person name="Haldenby S."/>
            <person name="Madupu R."/>
            <person name="Robinson J."/>
            <person name="Khouri H."/>
            <person name="Ren Q."/>
            <person name="Lowe T.M."/>
            <person name="Maupin-Furlow J."/>
            <person name="Pohlschroder M."/>
            <person name="Daniels C."/>
            <person name="Pfeiffer F."/>
            <person name="Allers T."/>
            <person name="Eisen J.A."/>
        </authorList>
    </citation>
    <scope>NUCLEOTIDE SEQUENCE [LARGE SCALE GENOMIC DNA]</scope>
    <source>
        <strain>ATCC 29605 / DSM 3757 / JCM 8879 / NBRC 14742 / NCIMB 2012 / VKM B-1768 / DS2</strain>
    </source>
</reference>
<evidence type="ECO:0000250" key="1"/>
<evidence type="ECO:0000255" key="2">
    <source>
        <dbReference type="HAMAP-Rule" id="MF_00736"/>
    </source>
</evidence>
<evidence type="ECO:0000256" key="3">
    <source>
        <dbReference type="SAM" id="MobiDB-lite"/>
    </source>
</evidence>
<evidence type="ECO:0000305" key="4"/>
<keyword id="KW-1185">Reference proteome</keyword>
<keyword id="KW-0687">Ribonucleoprotein</keyword>
<keyword id="KW-0689">Ribosomal protein</keyword>
<keyword id="KW-0694">RNA-binding</keyword>
<keyword id="KW-0699">rRNA-binding</keyword>
<protein>
    <recommendedName>
        <fullName evidence="2">Large ribosomal subunit protein uL11</fullName>
    </recommendedName>
    <alternativeName>
        <fullName evidence="4">50S ribosomal protein L11</fullName>
    </alternativeName>
    <alternativeName>
        <fullName>L11E</fullName>
    </alternativeName>
</protein>
<accession>P41200</accession>
<accession>D4GWC4</accession>